<proteinExistence type="evidence at transcript level"/>
<keyword id="KW-0025">Alternative splicing</keyword>
<keyword id="KW-0067">ATP-binding</keyword>
<keyword id="KW-0963">Cytoplasm</keyword>
<keyword id="KW-0418">Kinase</keyword>
<keyword id="KW-0547">Nucleotide-binding</keyword>
<keyword id="KW-0539">Nucleus</keyword>
<keyword id="KW-1185">Reference proteome</keyword>
<keyword id="KW-0723">Serine/threonine-protein kinase</keyword>
<keyword id="KW-0808">Transferase</keyword>
<feature type="chain" id="PRO_0000085816" description="Cyclin-dependent kinase-like 2">
    <location>
        <begin position="1"/>
        <end position="568"/>
    </location>
</feature>
<feature type="domain" description="Protein kinase" evidence="2">
    <location>
        <begin position="4"/>
        <end position="289"/>
    </location>
</feature>
<feature type="region of interest" description="Disordered" evidence="4">
    <location>
        <begin position="309"/>
        <end position="333"/>
    </location>
</feature>
<feature type="region of interest" description="Disordered" evidence="4">
    <location>
        <begin position="545"/>
        <end position="568"/>
    </location>
</feature>
<feature type="short sequence motif" description="[NKR]KIAxRE">
    <location>
        <begin position="45"/>
        <end position="51"/>
    </location>
</feature>
<feature type="compositionally biased region" description="Basic and acidic residues" evidence="4">
    <location>
        <begin position="322"/>
        <end position="333"/>
    </location>
</feature>
<feature type="active site" description="Proton acceptor" evidence="2 3">
    <location>
        <position position="126"/>
    </location>
</feature>
<feature type="binding site" evidence="2">
    <location>
        <begin position="10"/>
        <end position="18"/>
    </location>
    <ligand>
        <name>ATP</name>
        <dbReference type="ChEBI" id="CHEBI:30616"/>
    </ligand>
</feature>
<feature type="binding site" evidence="2">
    <location>
        <position position="33"/>
    </location>
    <ligand>
        <name>ATP</name>
        <dbReference type="ChEBI" id="CHEBI:30616"/>
    </ligand>
</feature>
<feature type="splice variant" id="VSP_016146" description="In isoform 2." evidence="6">
    <original>GAGSPLSDDSEADLPRM</original>
    <variation>MLPALEMTSSCTRALIP</variation>
    <location>
        <begin position="548"/>
        <end position="564"/>
    </location>
</feature>
<feature type="splice variant" id="VSP_016147" description="In isoform 2." evidence="6">
    <location>
        <begin position="565"/>
        <end position="568"/>
    </location>
</feature>
<feature type="sequence conflict" description="In Ref. 2; BAE43274." evidence="7" ref="2">
    <original>K</original>
    <variation>Q</variation>
    <location>
        <position position="56"/>
    </location>
</feature>
<feature type="sequence conflict" description="In Ref. 1; BAA88428." evidence="7" ref="1">
    <original>NR</original>
    <variation>KK</variation>
    <location>
        <begin position="321"/>
        <end position="322"/>
    </location>
</feature>
<feature type="sequence conflict" description="In Ref. 1; BAA88428." evidence="7" ref="1">
    <original>EKDDA</original>
    <variation>KKKKK</variation>
    <location>
        <begin position="325"/>
        <end position="329"/>
    </location>
</feature>
<feature type="sequence conflict" description="In Ref. 1; BAA88428." evidence="7" ref="1">
    <location>
        <begin position="330"/>
        <end position="568"/>
    </location>
</feature>
<sequence>MEKYENLGLVGEGSYGMVMKCRNKDSGRIVAIKKFLESDDDKMVKKIAMREIKLLKQLRHENLVNLLEVCKKKKRWYLVFEFVDHTILDDLKLFPNGLDYQVVQKYLFQIINGIGFCHSHNIIHRDIKPENILVSQSGVVKLCDFGFARTLAAPGEVYTDYVATRWYRAPELLVGDVKYGKAVDIWAIGCLVIEMLMGQPLFPGESDIDQLHHIMTCLGNLIPRHQELFYKNPVFAGVRLPEVKDAEAEPLESRYPKLPEAVISLAKKCLHIDPDKRPFCADLLRHDFFQMDGFAERFSQELQLKIEKDARNNSLPKKSQNRKKEKDDALGEERKTLVVQDTNADPKIKDSKVFKVKGSKIDVEKMEKGSRASNANCLHDNGTNHKGLASTSLRDCSNVNIDHSRNPGTAIPPLTHNLSAVAPGINAGMGTIPGVQNYRVDEKTKKYCNPFVKPNQPPPAGIYNMNVSTSVSGEKYLLQANKKRKEYPKADVRLPELNYNHLPELRALEGIARNSRLIKKENKCLSESRIPSLAAIDLHVSSVASHQGAGSPLSDDSEADLPRMEHQH</sequence>
<protein>
    <recommendedName>
        <fullName evidence="7">Cyclin-dependent kinase-like 2</fullName>
        <ecNumber>2.7.11.22</ecNumber>
    </recommendedName>
    <alternativeName>
        <fullName>Serine/threonine-protein kinase KKIAMRE</fullName>
    </alternativeName>
</protein>
<organism>
    <name type="scientific">Mus musculus</name>
    <name type="common">Mouse</name>
    <dbReference type="NCBI Taxonomy" id="10090"/>
    <lineage>
        <taxon>Eukaryota</taxon>
        <taxon>Metazoa</taxon>
        <taxon>Chordata</taxon>
        <taxon>Craniata</taxon>
        <taxon>Vertebrata</taxon>
        <taxon>Euteleostomi</taxon>
        <taxon>Mammalia</taxon>
        <taxon>Eutheria</taxon>
        <taxon>Euarchontoglires</taxon>
        <taxon>Glires</taxon>
        <taxon>Rodentia</taxon>
        <taxon>Myomorpha</taxon>
        <taxon>Muroidea</taxon>
        <taxon>Muridae</taxon>
        <taxon>Murinae</taxon>
        <taxon>Mus</taxon>
        <taxon>Mus</taxon>
    </lineage>
</organism>
<evidence type="ECO:0000250" key="1"/>
<evidence type="ECO:0000255" key="2">
    <source>
        <dbReference type="PROSITE-ProRule" id="PRU00159"/>
    </source>
</evidence>
<evidence type="ECO:0000255" key="3">
    <source>
        <dbReference type="PROSITE-ProRule" id="PRU10027"/>
    </source>
</evidence>
<evidence type="ECO:0000256" key="4">
    <source>
        <dbReference type="SAM" id="MobiDB-lite"/>
    </source>
</evidence>
<evidence type="ECO:0000269" key="5">
    <source>
    </source>
</evidence>
<evidence type="ECO:0000303" key="6">
    <source>
    </source>
</evidence>
<evidence type="ECO:0000305" key="7"/>
<evidence type="ECO:0000312" key="8">
    <source>
        <dbReference type="MGI" id="MGI:1858227"/>
    </source>
</evidence>
<dbReference type="EC" id="2.7.11.22"/>
<dbReference type="EMBL" id="AB029066">
    <property type="protein sequence ID" value="BAA88428.1"/>
    <property type="molecule type" value="mRNA"/>
</dbReference>
<dbReference type="EMBL" id="AB029067">
    <property type="protein sequence ID" value="BAA88429.1"/>
    <property type="molecule type" value="mRNA"/>
</dbReference>
<dbReference type="EMBL" id="AB029073">
    <property type="protein sequence ID" value="BAA88439.1"/>
    <property type="molecule type" value="Genomic_DNA"/>
</dbReference>
<dbReference type="EMBL" id="AB029065">
    <property type="protein sequence ID" value="BAA88427.1"/>
    <property type="molecule type" value="mRNA"/>
</dbReference>
<dbReference type="EMBL" id="AK030598">
    <property type="protein sequence ID" value="BAE43274.1"/>
    <property type="status" value="ALT_INIT"/>
    <property type="molecule type" value="mRNA"/>
</dbReference>
<dbReference type="EMBL" id="AK144574">
    <property type="protein sequence ID" value="BAE25943.1"/>
    <property type="molecule type" value="mRNA"/>
</dbReference>
<dbReference type="EMBL" id="AK145688">
    <property type="protein sequence ID" value="BAE26590.1"/>
    <property type="molecule type" value="mRNA"/>
</dbReference>
<dbReference type="CCDS" id="CCDS19425.1">
    <molecule id="Q9QUK0-2"/>
</dbReference>
<dbReference type="CCDS" id="CCDS19426.1">
    <molecule id="Q9QUK0-1"/>
</dbReference>
<dbReference type="RefSeq" id="NP_001263244.1">
    <molecule id="Q9QUK0-2"/>
    <property type="nucleotide sequence ID" value="NM_001276315.1"/>
</dbReference>
<dbReference type="RefSeq" id="NP_058608.1">
    <molecule id="Q9QUK0-1"/>
    <property type="nucleotide sequence ID" value="NM_016912.2"/>
</dbReference>
<dbReference type="RefSeq" id="NP_796244.2">
    <molecule id="Q9QUK0-2"/>
    <property type="nucleotide sequence ID" value="NM_177270.4"/>
</dbReference>
<dbReference type="RefSeq" id="XP_011247839.1">
    <molecule id="Q9QUK0-1"/>
    <property type="nucleotide sequence ID" value="XM_011249537.4"/>
</dbReference>
<dbReference type="RefSeq" id="XP_017176476.1">
    <molecule id="Q9QUK0-1"/>
    <property type="nucleotide sequence ID" value="XM_017320987.3"/>
</dbReference>
<dbReference type="RefSeq" id="XP_017176477.1">
    <molecule id="Q9QUK0-1"/>
    <property type="nucleotide sequence ID" value="XM_017320988.2"/>
</dbReference>
<dbReference type="SMR" id="Q9QUK0"/>
<dbReference type="FunCoup" id="Q9QUK0">
    <property type="interactions" value="1181"/>
</dbReference>
<dbReference type="STRING" id="10090.ENSMUSP00000084199"/>
<dbReference type="iPTMnet" id="Q9QUK0"/>
<dbReference type="PhosphoSitePlus" id="Q9QUK0"/>
<dbReference type="PaxDb" id="10090-ENSMUSP00000084199"/>
<dbReference type="ProteomicsDB" id="281560">
    <molecule id="Q9QUK0-1"/>
</dbReference>
<dbReference type="ProteomicsDB" id="281561">
    <molecule id="Q9QUK0-2"/>
</dbReference>
<dbReference type="Antibodypedia" id="24675">
    <property type="antibodies" value="254 antibodies from 28 providers"/>
</dbReference>
<dbReference type="DNASU" id="53886"/>
<dbReference type="Ensembl" id="ENSMUST00000069937.11">
    <molecule id="Q9QUK0-2"/>
    <property type="protein sequence ID" value="ENSMUSP00000063617.5"/>
    <property type="gene ID" value="ENSMUSG00000029403.15"/>
</dbReference>
<dbReference type="Ensembl" id="ENSMUST00000086978.12">
    <molecule id="Q9QUK0-1"/>
    <property type="protein sequence ID" value="ENSMUSP00000084199.6"/>
    <property type="gene ID" value="ENSMUSG00000029403.15"/>
</dbReference>
<dbReference type="Ensembl" id="ENSMUST00000113140.5">
    <molecule id="Q9QUK0-1"/>
    <property type="protein sequence ID" value="ENSMUSP00000108765.2"/>
    <property type="gene ID" value="ENSMUSG00000029403.15"/>
</dbReference>
<dbReference type="Ensembl" id="ENSMUST00000113143.8">
    <molecule id="Q9QUK0-2"/>
    <property type="protein sequence ID" value="ENSMUSP00000108768.2"/>
    <property type="gene ID" value="ENSMUSG00000029403.15"/>
</dbReference>
<dbReference type="GeneID" id="53886"/>
<dbReference type="KEGG" id="mmu:53886"/>
<dbReference type="UCSC" id="uc008ycc.2">
    <molecule id="Q9QUK0-1"/>
    <property type="organism name" value="mouse"/>
</dbReference>
<dbReference type="UCSC" id="uc008ycd.2">
    <molecule id="Q9QUK0-2"/>
    <property type="organism name" value="mouse"/>
</dbReference>
<dbReference type="AGR" id="MGI:1858227"/>
<dbReference type="CTD" id="8999"/>
<dbReference type="MGI" id="MGI:1858227">
    <property type="gene designation" value="Cdkl2"/>
</dbReference>
<dbReference type="VEuPathDB" id="HostDB:ENSMUSG00000029403"/>
<dbReference type="eggNOG" id="KOG0593">
    <property type="taxonomic scope" value="Eukaryota"/>
</dbReference>
<dbReference type="GeneTree" id="ENSGT00940000160368"/>
<dbReference type="HOGENOM" id="CLU_000288_136_0_1"/>
<dbReference type="InParanoid" id="Q9QUK0"/>
<dbReference type="OMA" id="KRWEFSK"/>
<dbReference type="OrthoDB" id="548217at2759"/>
<dbReference type="PhylomeDB" id="Q9QUK0"/>
<dbReference type="TreeFam" id="TF101031"/>
<dbReference type="BioGRID-ORCS" id="53886">
    <property type="hits" value="1 hit in 79 CRISPR screens"/>
</dbReference>
<dbReference type="PRO" id="PR:Q9QUK0"/>
<dbReference type="Proteomes" id="UP000000589">
    <property type="component" value="Chromosome 5"/>
</dbReference>
<dbReference type="RNAct" id="Q9QUK0">
    <property type="molecule type" value="protein"/>
</dbReference>
<dbReference type="Bgee" id="ENSMUSG00000029403">
    <property type="expression patterns" value="Expressed in barrel cortex and 206 other cell types or tissues"/>
</dbReference>
<dbReference type="ExpressionAtlas" id="Q9QUK0">
    <property type="expression patterns" value="baseline and differential"/>
</dbReference>
<dbReference type="GO" id="GO:0005813">
    <property type="term" value="C:centrosome"/>
    <property type="evidence" value="ECO:0007669"/>
    <property type="project" value="Ensembl"/>
</dbReference>
<dbReference type="GO" id="GO:0005737">
    <property type="term" value="C:cytoplasm"/>
    <property type="evidence" value="ECO:0007669"/>
    <property type="project" value="UniProtKB-SubCell"/>
</dbReference>
<dbReference type="GO" id="GO:0005654">
    <property type="term" value="C:nucleoplasm"/>
    <property type="evidence" value="ECO:0007669"/>
    <property type="project" value="Ensembl"/>
</dbReference>
<dbReference type="GO" id="GO:0005524">
    <property type="term" value="F:ATP binding"/>
    <property type="evidence" value="ECO:0007669"/>
    <property type="project" value="UniProtKB-KW"/>
</dbReference>
<dbReference type="GO" id="GO:0004693">
    <property type="term" value="F:cyclin-dependent protein serine/threonine kinase activity"/>
    <property type="evidence" value="ECO:0007669"/>
    <property type="project" value="UniProtKB-EC"/>
</dbReference>
<dbReference type="GO" id="GO:0106310">
    <property type="term" value="F:protein serine kinase activity"/>
    <property type="evidence" value="ECO:0007669"/>
    <property type="project" value="RHEA"/>
</dbReference>
<dbReference type="CDD" id="cd07846">
    <property type="entry name" value="STKc_CDKL2_3"/>
    <property type="match status" value="1"/>
</dbReference>
<dbReference type="FunFam" id="3.30.200.20:FF:000049">
    <property type="entry name" value="cyclin-dependent kinase-like 1 isoform X1"/>
    <property type="match status" value="1"/>
</dbReference>
<dbReference type="FunFam" id="1.10.510.10:FF:000261">
    <property type="entry name" value="cyclin-dependent kinase-like 2 isoform X2"/>
    <property type="match status" value="1"/>
</dbReference>
<dbReference type="Gene3D" id="3.30.200.20">
    <property type="entry name" value="Phosphorylase Kinase, domain 1"/>
    <property type="match status" value="1"/>
</dbReference>
<dbReference type="Gene3D" id="1.10.510.10">
    <property type="entry name" value="Transferase(Phosphotransferase) domain 1"/>
    <property type="match status" value="1"/>
</dbReference>
<dbReference type="InterPro" id="IPR050108">
    <property type="entry name" value="CDK"/>
</dbReference>
<dbReference type="InterPro" id="IPR011009">
    <property type="entry name" value="Kinase-like_dom_sf"/>
</dbReference>
<dbReference type="InterPro" id="IPR000719">
    <property type="entry name" value="Prot_kinase_dom"/>
</dbReference>
<dbReference type="InterPro" id="IPR017441">
    <property type="entry name" value="Protein_kinase_ATP_BS"/>
</dbReference>
<dbReference type="InterPro" id="IPR008271">
    <property type="entry name" value="Ser/Thr_kinase_AS"/>
</dbReference>
<dbReference type="PANTHER" id="PTHR24056">
    <property type="entry name" value="CELL DIVISION PROTEIN KINASE"/>
    <property type="match status" value="1"/>
</dbReference>
<dbReference type="PANTHER" id="PTHR24056:SF241">
    <property type="entry name" value="CYCLIN-DEPENDENT KINASE-LIKE 2"/>
    <property type="match status" value="1"/>
</dbReference>
<dbReference type="Pfam" id="PF00069">
    <property type="entry name" value="Pkinase"/>
    <property type="match status" value="1"/>
</dbReference>
<dbReference type="SMART" id="SM00220">
    <property type="entry name" value="S_TKc"/>
    <property type="match status" value="1"/>
</dbReference>
<dbReference type="SUPFAM" id="SSF56112">
    <property type="entry name" value="Protein kinase-like (PK-like)"/>
    <property type="match status" value="1"/>
</dbReference>
<dbReference type="PROSITE" id="PS00107">
    <property type="entry name" value="PROTEIN_KINASE_ATP"/>
    <property type="match status" value="1"/>
</dbReference>
<dbReference type="PROSITE" id="PS50011">
    <property type="entry name" value="PROTEIN_KINASE_DOM"/>
    <property type="match status" value="1"/>
</dbReference>
<dbReference type="PROSITE" id="PS00108">
    <property type="entry name" value="PROTEIN_KINASE_ST"/>
    <property type="match status" value="1"/>
</dbReference>
<name>CDKL2_MOUSE</name>
<reference key="1">
    <citation type="journal article" date="2004" name="Cell Tissue Res.">
        <title>Postnatal expression of Cdkl2 in mouse brain revealed by LacZ inserted into the Cdkl2 locus.</title>
        <authorList>
            <person name="Sassa T."/>
            <person name="Gomi H."/>
            <person name="Itohara S."/>
        </authorList>
    </citation>
    <scope>NUCLEOTIDE SEQUENCE [GENOMIC DNA / MRNA] (ISOFORMS 1 AND 2)</scope>
    <scope>TISSUE SPECIFICITY</scope>
    <source>
        <strain>129/SvJ</strain>
        <strain>C57BL/6J</strain>
        <tissue>Brain</tissue>
    </source>
</reference>
<reference key="2">
    <citation type="journal article" date="2005" name="Science">
        <title>The transcriptional landscape of the mammalian genome.</title>
        <authorList>
            <person name="Carninci P."/>
            <person name="Kasukawa T."/>
            <person name="Katayama S."/>
            <person name="Gough J."/>
            <person name="Frith M.C."/>
            <person name="Maeda N."/>
            <person name="Oyama R."/>
            <person name="Ravasi T."/>
            <person name="Lenhard B."/>
            <person name="Wells C."/>
            <person name="Kodzius R."/>
            <person name="Shimokawa K."/>
            <person name="Bajic V.B."/>
            <person name="Brenner S.E."/>
            <person name="Batalov S."/>
            <person name="Forrest A.R."/>
            <person name="Zavolan M."/>
            <person name="Davis M.J."/>
            <person name="Wilming L.G."/>
            <person name="Aidinis V."/>
            <person name="Allen J.E."/>
            <person name="Ambesi-Impiombato A."/>
            <person name="Apweiler R."/>
            <person name="Aturaliya R.N."/>
            <person name="Bailey T.L."/>
            <person name="Bansal M."/>
            <person name="Baxter L."/>
            <person name="Beisel K.W."/>
            <person name="Bersano T."/>
            <person name="Bono H."/>
            <person name="Chalk A.M."/>
            <person name="Chiu K.P."/>
            <person name="Choudhary V."/>
            <person name="Christoffels A."/>
            <person name="Clutterbuck D.R."/>
            <person name="Crowe M.L."/>
            <person name="Dalla E."/>
            <person name="Dalrymple B.P."/>
            <person name="de Bono B."/>
            <person name="Della Gatta G."/>
            <person name="di Bernardo D."/>
            <person name="Down T."/>
            <person name="Engstrom P."/>
            <person name="Fagiolini M."/>
            <person name="Faulkner G."/>
            <person name="Fletcher C.F."/>
            <person name="Fukushima T."/>
            <person name="Furuno M."/>
            <person name="Futaki S."/>
            <person name="Gariboldi M."/>
            <person name="Georgii-Hemming P."/>
            <person name="Gingeras T.R."/>
            <person name="Gojobori T."/>
            <person name="Green R.E."/>
            <person name="Gustincich S."/>
            <person name="Harbers M."/>
            <person name="Hayashi Y."/>
            <person name="Hensch T.K."/>
            <person name="Hirokawa N."/>
            <person name="Hill D."/>
            <person name="Huminiecki L."/>
            <person name="Iacono M."/>
            <person name="Ikeo K."/>
            <person name="Iwama A."/>
            <person name="Ishikawa T."/>
            <person name="Jakt M."/>
            <person name="Kanapin A."/>
            <person name="Katoh M."/>
            <person name="Kawasawa Y."/>
            <person name="Kelso J."/>
            <person name="Kitamura H."/>
            <person name="Kitano H."/>
            <person name="Kollias G."/>
            <person name="Krishnan S.P."/>
            <person name="Kruger A."/>
            <person name="Kummerfeld S.K."/>
            <person name="Kurochkin I.V."/>
            <person name="Lareau L.F."/>
            <person name="Lazarevic D."/>
            <person name="Lipovich L."/>
            <person name="Liu J."/>
            <person name="Liuni S."/>
            <person name="McWilliam S."/>
            <person name="Madan Babu M."/>
            <person name="Madera M."/>
            <person name="Marchionni L."/>
            <person name="Matsuda H."/>
            <person name="Matsuzawa S."/>
            <person name="Miki H."/>
            <person name="Mignone F."/>
            <person name="Miyake S."/>
            <person name="Morris K."/>
            <person name="Mottagui-Tabar S."/>
            <person name="Mulder N."/>
            <person name="Nakano N."/>
            <person name="Nakauchi H."/>
            <person name="Ng P."/>
            <person name="Nilsson R."/>
            <person name="Nishiguchi S."/>
            <person name="Nishikawa S."/>
            <person name="Nori F."/>
            <person name="Ohara O."/>
            <person name="Okazaki Y."/>
            <person name="Orlando V."/>
            <person name="Pang K.C."/>
            <person name="Pavan W.J."/>
            <person name="Pavesi G."/>
            <person name="Pesole G."/>
            <person name="Petrovsky N."/>
            <person name="Piazza S."/>
            <person name="Reed J."/>
            <person name="Reid J.F."/>
            <person name="Ring B.Z."/>
            <person name="Ringwald M."/>
            <person name="Rost B."/>
            <person name="Ruan Y."/>
            <person name="Salzberg S.L."/>
            <person name="Sandelin A."/>
            <person name="Schneider C."/>
            <person name="Schoenbach C."/>
            <person name="Sekiguchi K."/>
            <person name="Semple C.A."/>
            <person name="Seno S."/>
            <person name="Sessa L."/>
            <person name="Sheng Y."/>
            <person name="Shibata Y."/>
            <person name="Shimada H."/>
            <person name="Shimada K."/>
            <person name="Silva D."/>
            <person name="Sinclair B."/>
            <person name="Sperling S."/>
            <person name="Stupka E."/>
            <person name="Sugiura K."/>
            <person name="Sultana R."/>
            <person name="Takenaka Y."/>
            <person name="Taki K."/>
            <person name="Tammoja K."/>
            <person name="Tan S.L."/>
            <person name="Tang S."/>
            <person name="Taylor M.S."/>
            <person name="Tegner J."/>
            <person name="Teichmann S.A."/>
            <person name="Ueda H.R."/>
            <person name="van Nimwegen E."/>
            <person name="Verardo R."/>
            <person name="Wei C.L."/>
            <person name="Yagi K."/>
            <person name="Yamanishi H."/>
            <person name="Zabarovsky E."/>
            <person name="Zhu S."/>
            <person name="Zimmer A."/>
            <person name="Hide W."/>
            <person name="Bult C."/>
            <person name="Grimmond S.M."/>
            <person name="Teasdale R.D."/>
            <person name="Liu E.T."/>
            <person name="Brusic V."/>
            <person name="Quackenbush J."/>
            <person name="Wahlestedt C."/>
            <person name="Mattick J.S."/>
            <person name="Hume D.A."/>
            <person name="Kai C."/>
            <person name="Sasaki D."/>
            <person name="Tomaru Y."/>
            <person name="Fukuda S."/>
            <person name="Kanamori-Katayama M."/>
            <person name="Suzuki M."/>
            <person name="Aoki J."/>
            <person name="Arakawa T."/>
            <person name="Iida J."/>
            <person name="Imamura K."/>
            <person name="Itoh M."/>
            <person name="Kato T."/>
            <person name="Kawaji H."/>
            <person name="Kawagashira N."/>
            <person name="Kawashima T."/>
            <person name="Kojima M."/>
            <person name="Kondo S."/>
            <person name="Konno H."/>
            <person name="Nakano K."/>
            <person name="Ninomiya N."/>
            <person name="Nishio T."/>
            <person name="Okada M."/>
            <person name="Plessy C."/>
            <person name="Shibata K."/>
            <person name="Shiraki T."/>
            <person name="Suzuki S."/>
            <person name="Tagami M."/>
            <person name="Waki K."/>
            <person name="Watahiki A."/>
            <person name="Okamura-Oho Y."/>
            <person name="Suzuki H."/>
            <person name="Kawai J."/>
            <person name="Hayashizaki Y."/>
        </authorList>
    </citation>
    <scope>NUCLEOTIDE SEQUENCE [LARGE SCALE MRNA] (ISOFORM 1)</scope>
    <source>
        <strain>C57BL/6J</strain>
        <tissue>Lung</tissue>
        <tissue>Pituitary</tissue>
    </source>
</reference>
<accession>Q9QUK0</accession>
<accession>Q3UL60</accession>
<accession>Q3V3X7</accession>
<accession>Q9QYI1</accession>
<accession>Q9QYI2</accession>
<gene>
    <name evidence="8" type="primary">Cdkl2</name>
    <name type="synonym">Kkiamre</name>
    <name type="synonym">Kkm</name>
</gene>
<comment type="catalytic activity">
    <reaction>
        <text>L-seryl-[protein] + ATP = O-phospho-L-seryl-[protein] + ADP + H(+)</text>
        <dbReference type="Rhea" id="RHEA:17989"/>
        <dbReference type="Rhea" id="RHEA-COMP:9863"/>
        <dbReference type="Rhea" id="RHEA-COMP:11604"/>
        <dbReference type="ChEBI" id="CHEBI:15378"/>
        <dbReference type="ChEBI" id="CHEBI:29999"/>
        <dbReference type="ChEBI" id="CHEBI:30616"/>
        <dbReference type="ChEBI" id="CHEBI:83421"/>
        <dbReference type="ChEBI" id="CHEBI:456216"/>
        <dbReference type="EC" id="2.7.11.22"/>
    </reaction>
</comment>
<comment type="catalytic activity">
    <reaction>
        <text>L-threonyl-[protein] + ATP = O-phospho-L-threonyl-[protein] + ADP + H(+)</text>
        <dbReference type="Rhea" id="RHEA:46608"/>
        <dbReference type="Rhea" id="RHEA-COMP:11060"/>
        <dbReference type="Rhea" id="RHEA-COMP:11605"/>
        <dbReference type="ChEBI" id="CHEBI:15378"/>
        <dbReference type="ChEBI" id="CHEBI:30013"/>
        <dbReference type="ChEBI" id="CHEBI:30616"/>
        <dbReference type="ChEBI" id="CHEBI:61977"/>
        <dbReference type="ChEBI" id="CHEBI:456216"/>
        <dbReference type="EC" id="2.7.11.22"/>
    </reaction>
</comment>
<comment type="subcellular location">
    <subcellularLocation>
        <location evidence="1">Cytoplasm</location>
    </subcellularLocation>
    <subcellularLocation>
        <location evidence="1">Nucleus</location>
    </subcellularLocation>
</comment>
<comment type="alternative products">
    <event type="alternative splicing"/>
    <isoform>
        <id>Q9QUK0-1</id>
        <name>1</name>
        <name>KKIAMRE-beta</name>
        <sequence type="displayed"/>
    </isoform>
    <isoform>
        <id>Q9QUK0-2</id>
        <name>2</name>
        <name>KKIAMRE-gamma</name>
        <sequence type="described" ref="VSP_016146 VSP_016147"/>
    </isoform>
</comment>
<comment type="tissue specificity">
    <text evidence="5">Expressed in testis, kidney, lung and brain.</text>
</comment>
<comment type="domain">
    <text>The [NKR]KIAxRE motif seems to be a cyclin-binding region.</text>
</comment>
<comment type="similarity">
    <text evidence="7">Belongs to the protein kinase superfamily. CMGC Ser/Thr protein kinase family. CDC2/CDKX subfamily.</text>
</comment>
<comment type="sequence caution" evidence="7">
    <conflict type="erroneous initiation">
        <sequence resource="EMBL-CDS" id="BAE43274"/>
    </conflict>
</comment>